<organism>
    <name type="scientific">Methanococcus aeolicus (strain ATCC BAA-1280 / DSM 17508 / OCM 812 / Nankai-3)</name>
    <dbReference type="NCBI Taxonomy" id="419665"/>
    <lineage>
        <taxon>Archaea</taxon>
        <taxon>Methanobacteriati</taxon>
        <taxon>Methanobacteriota</taxon>
        <taxon>Methanomada group</taxon>
        <taxon>Methanococci</taxon>
        <taxon>Methanococcales</taxon>
        <taxon>Methanococcaceae</taxon>
        <taxon>Methanococcus</taxon>
    </lineage>
</organism>
<sequence length="356" mass="39390">MSNDIEFRKLEHLFVCNYCDVEYKKGTLLEDVELIHSGISNCDLEDIDTSINLFGKNLGAPIIVAAITGGHSKAKEINKNIAIAIDELNLGMGVGSQRAALINEELMETYSVVRDYTSSLVLGNLGAVNFIEDGWDEETIHKAVEMIDADGMAIHFNPLQEAIQPEGDYNFKGIEILKDIMENYNKTYNNKSNKKIPFIAKQVGEGFSKEDALLLNGLGFDSIDVGGSGGTSWAAVEYYRIKDEESKKFSKKYLEWGIPTAASILEVKQNFDKPIIATGGIRSGMDIAKSMAIGAQCCGVALPVLKAALRGSEDVIKLIENYIEELKTTMFLMGCDNVNELMNSRYIIKNELKEWI</sequence>
<dbReference type="EC" id="5.3.3.2" evidence="1"/>
<dbReference type="EMBL" id="CP000743">
    <property type="protein sequence ID" value="ABR56761.1"/>
    <property type="molecule type" value="Genomic_DNA"/>
</dbReference>
<dbReference type="RefSeq" id="WP_011973893.1">
    <property type="nucleotide sequence ID" value="NC_009635.1"/>
</dbReference>
<dbReference type="SMR" id="A6UW89"/>
<dbReference type="STRING" id="419665.Maeo_1184"/>
<dbReference type="GeneID" id="5327366"/>
<dbReference type="GeneID" id="75304635"/>
<dbReference type="KEGG" id="mae:Maeo_1184"/>
<dbReference type="eggNOG" id="arCOG00613">
    <property type="taxonomic scope" value="Archaea"/>
</dbReference>
<dbReference type="HOGENOM" id="CLU_065515_1_0_2"/>
<dbReference type="OrthoDB" id="371955at2157"/>
<dbReference type="Proteomes" id="UP000001106">
    <property type="component" value="Chromosome"/>
</dbReference>
<dbReference type="GO" id="GO:0005737">
    <property type="term" value="C:cytoplasm"/>
    <property type="evidence" value="ECO:0007669"/>
    <property type="project" value="UniProtKB-SubCell"/>
</dbReference>
<dbReference type="GO" id="GO:0010181">
    <property type="term" value="F:FMN binding"/>
    <property type="evidence" value="ECO:0007669"/>
    <property type="project" value="UniProtKB-UniRule"/>
</dbReference>
<dbReference type="GO" id="GO:0004452">
    <property type="term" value="F:isopentenyl-diphosphate delta-isomerase activity"/>
    <property type="evidence" value="ECO:0007669"/>
    <property type="project" value="UniProtKB-UniRule"/>
</dbReference>
<dbReference type="GO" id="GO:0000287">
    <property type="term" value="F:magnesium ion binding"/>
    <property type="evidence" value="ECO:0007669"/>
    <property type="project" value="UniProtKB-UniRule"/>
</dbReference>
<dbReference type="GO" id="GO:0070402">
    <property type="term" value="F:NADPH binding"/>
    <property type="evidence" value="ECO:0007669"/>
    <property type="project" value="UniProtKB-UniRule"/>
</dbReference>
<dbReference type="GO" id="GO:0016491">
    <property type="term" value="F:oxidoreductase activity"/>
    <property type="evidence" value="ECO:0007669"/>
    <property type="project" value="InterPro"/>
</dbReference>
<dbReference type="GO" id="GO:0008299">
    <property type="term" value="P:isoprenoid biosynthetic process"/>
    <property type="evidence" value="ECO:0007669"/>
    <property type="project" value="UniProtKB-UniRule"/>
</dbReference>
<dbReference type="CDD" id="cd02811">
    <property type="entry name" value="IDI-2_FMN"/>
    <property type="match status" value="1"/>
</dbReference>
<dbReference type="Gene3D" id="3.20.20.70">
    <property type="entry name" value="Aldolase class I"/>
    <property type="match status" value="1"/>
</dbReference>
<dbReference type="HAMAP" id="MF_00354">
    <property type="entry name" value="Idi_2"/>
    <property type="match status" value="1"/>
</dbReference>
<dbReference type="InterPro" id="IPR013785">
    <property type="entry name" value="Aldolase_TIM"/>
</dbReference>
<dbReference type="InterPro" id="IPR000262">
    <property type="entry name" value="FMN-dep_DH"/>
</dbReference>
<dbReference type="InterPro" id="IPR011179">
    <property type="entry name" value="IPdP_isomerase"/>
</dbReference>
<dbReference type="NCBIfam" id="TIGR02151">
    <property type="entry name" value="IPP_isom_2"/>
    <property type="match status" value="1"/>
</dbReference>
<dbReference type="PANTHER" id="PTHR43665">
    <property type="entry name" value="ISOPENTENYL-DIPHOSPHATE DELTA-ISOMERASE"/>
    <property type="match status" value="1"/>
</dbReference>
<dbReference type="PANTHER" id="PTHR43665:SF1">
    <property type="entry name" value="ISOPENTENYL-DIPHOSPHATE DELTA-ISOMERASE"/>
    <property type="match status" value="1"/>
</dbReference>
<dbReference type="Pfam" id="PF01070">
    <property type="entry name" value="FMN_dh"/>
    <property type="match status" value="1"/>
</dbReference>
<dbReference type="PIRSF" id="PIRSF003314">
    <property type="entry name" value="IPP_isomerase"/>
    <property type="match status" value="1"/>
</dbReference>
<dbReference type="SUPFAM" id="SSF51395">
    <property type="entry name" value="FMN-linked oxidoreductases"/>
    <property type="match status" value="1"/>
</dbReference>
<reference key="1">
    <citation type="submission" date="2007-06" db="EMBL/GenBank/DDBJ databases">
        <title>Complete sequence of Methanococcus aeolicus Nankai-3.</title>
        <authorList>
            <consortium name="US DOE Joint Genome Institute"/>
            <person name="Copeland A."/>
            <person name="Lucas S."/>
            <person name="Lapidus A."/>
            <person name="Barry K."/>
            <person name="Glavina del Rio T."/>
            <person name="Dalin E."/>
            <person name="Tice H."/>
            <person name="Pitluck S."/>
            <person name="Chain P."/>
            <person name="Malfatti S."/>
            <person name="Shin M."/>
            <person name="Vergez L."/>
            <person name="Schmutz J."/>
            <person name="Larimer F."/>
            <person name="Land M."/>
            <person name="Hauser L."/>
            <person name="Kyrpides N."/>
            <person name="Lykidis A."/>
            <person name="Sieprawska-Lupa M."/>
            <person name="Whitman W.B."/>
            <person name="Richardson P."/>
        </authorList>
    </citation>
    <scope>NUCLEOTIDE SEQUENCE [LARGE SCALE GENOMIC DNA]</scope>
    <source>
        <strain>ATCC BAA-1280 / DSM 17508 / OCM 812 / Nankai-3</strain>
    </source>
</reference>
<gene>
    <name evidence="1" type="primary">fni</name>
    <name type="ordered locus">Maeo_1184</name>
</gene>
<name>IDI2_META3</name>
<comment type="function">
    <text evidence="1">Involved in the biosynthesis of isoprenoids. Catalyzes the 1,3-allylic rearrangement of the homoallylic substrate isopentenyl (IPP) to its allylic isomer, dimethylallyl diphosphate (DMAPP).</text>
</comment>
<comment type="catalytic activity">
    <reaction evidence="1">
        <text>isopentenyl diphosphate = dimethylallyl diphosphate</text>
        <dbReference type="Rhea" id="RHEA:23284"/>
        <dbReference type="ChEBI" id="CHEBI:57623"/>
        <dbReference type="ChEBI" id="CHEBI:128769"/>
        <dbReference type="EC" id="5.3.3.2"/>
    </reaction>
</comment>
<comment type="cofactor">
    <cofactor evidence="1">
        <name>FMN</name>
        <dbReference type="ChEBI" id="CHEBI:58210"/>
    </cofactor>
</comment>
<comment type="cofactor">
    <cofactor evidence="1">
        <name>NADPH</name>
        <dbReference type="ChEBI" id="CHEBI:57783"/>
    </cofactor>
</comment>
<comment type="cofactor">
    <cofactor evidence="1">
        <name>Mg(2+)</name>
        <dbReference type="ChEBI" id="CHEBI:18420"/>
    </cofactor>
</comment>
<comment type="subunit">
    <text evidence="1">Homooctamer. Dimer of tetramers.</text>
</comment>
<comment type="subcellular location">
    <subcellularLocation>
        <location evidence="1">Cytoplasm</location>
    </subcellularLocation>
</comment>
<comment type="similarity">
    <text evidence="1">Belongs to the IPP isomerase type 2 family.</text>
</comment>
<proteinExistence type="inferred from homology"/>
<keyword id="KW-0963">Cytoplasm</keyword>
<keyword id="KW-0285">Flavoprotein</keyword>
<keyword id="KW-0288">FMN</keyword>
<keyword id="KW-0413">Isomerase</keyword>
<keyword id="KW-0414">Isoprene biosynthesis</keyword>
<keyword id="KW-0460">Magnesium</keyword>
<keyword id="KW-0479">Metal-binding</keyword>
<keyword id="KW-0521">NADP</keyword>
<protein>
    <recommendedName>
        <fullName evidence="1">Isopentenyl-diphosphate delta-isomerase</fullName>
        <shortName evidence="1">IPP isomerase</shortName>
        <ecNumber evidence="1">5.3.3.2</ecNumber>
    </recommendedName>
    <alternativeName>
        <fullName evidence="1">Isopentenyl diphosphate:dimethylallyl diphosphate isomerase</fullName>
    </alternativeName>
    <alternativeName>
        <fullName evidence="1">Isopentenyl pyrophosphate isomerase</fullName>
    </alternativeName>
    <alternativeName>
        <fullName evidence="1">Type 2 isopentenyl diphosphate isomerase</fullName>
        <shortName evidence="1">IDI-2</shortName>
    </alternativeName>
</protein>
<accession>A6UW89</accession>
<feature type="chain" id="PRO_1000072069" description="Isopentenyl-diphosphate delta-isomerase">
    <location>
        <begin position="1"/>
        <end position="356"/>
    </location>
</feature>
<feature type="binding site" evidence="1">
    <location>
        <begin position="8"/>
        <end position="9"/>
    </location>
    <ligand>
        <name>substrate</name>
    </ligand>
</feature>
<feature type="binding site" evidence="1">
    <location>
        <begin position="66"/>
        <end position="68"/>
    </location>
    <ligand>
        <name>FMN</name>
        <dbReference type="ChEBI" id="CHEBI:58210"/>
    </ligand>
</feature>
<feature type="binding site" evidence="1">
    <location>
        <begin position="96"/>
        <end position="98"/>
    </location>
    <ligand>
        <name>substrate</name>
    </ligand>
</feature>
<feature type="binding site" evidence="1">
    <location>
        <position position="96"/>
    </location>
    <ligand>
        <name>FMN</name>
        <dbReference type="ChEBI" id="CHEBI:58210"/>
    </ligand>
</feature>
<feature type="binding site" evidence="1">
    <location>
        <position position="124"/>
    </location>
    <ligand>
        <name>FMN</name>
        <dbReference type="ChEBI" id="CHEBI:58210"/>
    </ligand>
</feature>
<feature type="binding site" evidence="1">
    <location>
        <position position="160"/>
    </location>
    <ligand>
        <name>substrate</name>
    </ligand>
</feature>
<feature type="binding site" evidence="1">
    <location>
        <position position="161"/>
    </location>
    <ligand>
        <name>Mg(2+)</name>
        <dbReference type="ChEBI" id="CHEBI:18420"/>
    </ligand>
</feature>
<feature type="binding site" evidence="1">
    <location>
        <position position="201"/>
    </location>
    <ligand>
        <name>FMN</name>
        <dbReference type="ChEBI" id="CHEBI:58210"/>
    </ligand>
</feature>
<feature type="binding site" evidence="1">
    <location>
        <position position="231"/>
    </location>
    <ligand>
        <name>FMN</name>
        <dbReference type="ChEBI" id="CHEBI:58210"/>
    </ligand>
</feature>
<feature type="binding site" evidence="1">
    <location>
        <begin position="280"/>
        <end position="282"/>
    </location>
    <ligand>
        <name>FMN</name>
        <dbReference type="ChEBI" id="CHEBI:58210"/>
    </ligand>
</feature>
<feature type="binding site" evidence="1">
    <location>
        <begin position="301"/>
        <end position="302"/>
    </location>
    <ligand>
        <name>FMN</name>
        <dbReference type="ChEBI" id="CHEBI:58210"/>
    </ligand>
</feature>
<evidence type="ECO:0000255" key="1">
    <source>
        <dbReference type="HAMAP-Rule" id="MF_00354"/>
    </source>
</evidence>